<sequence>MIRSALDSKDLAKRGESLIRQSSNRYLTTVRIAFRAKQRRFDDFDGLLEESSVKPVQRAIIELSDEQDQPDLLPG</sequence>
<organism>
    <name type="scientific">Prochlorococcus marinus (strain MIT 9211)</name>
    <dbReference type="NCBI Taxonomy" id="93059"/>
    <lineage>
        <taxon>Bacteria</taxon>
        <taxon>Bacillati</taxon>
        <taxon>Cyanobacteriota</taxon>
        <taxon>Cyanophyceae</taxon>
        <taxon>Synechococcales</taxon>
        <taxon>Prochlorococcaceae</taxon>
        <taxon>Prochlorococcus</taxon>
    </lineage>
</organism>
<dbReference type="EC" id="2.7.7.6" evidence="1"/>
<dbReference type="EMBL" id="CP000878">
    <property type="protein sequence ID" value="ABX09480.1"/>
    <property type="molecule type" value="Genomic_DNA"/>
</dbReference>
<dbReference type="RefSeq" id="WP_012196101.1">
    <property type="nucleotide sequence ID" value="NC_009976.1"/>
</dbReference>
<dbReference type="SMR" id="A9BCB8"/>
<dbReference type="STRING" id="93059.P9211_15491"/>
<dbReference type="KEGG" id="pmj:P9211_15491"/>
<dbReference type="eggNOG" id="ENOG5032RMS">
    <property type="taxonomic scope" value="Bacteria"/>
</dbReference>
<dbReference type="HOGENOM" id="CLU_175526_0_0_3"/>
<dbReference type="OrthoDB" id="463386at2"/>
<dbReference type="Proteomes" id="UP000000788">
    <property type="component" value="Chromosome"/>
</dbReference>
<dbReference type="GO" id="GO:0000428">
    <property type="term" value="C:DNA-directed RNA polymerase complex"/>
    <property type="evidence" value="ECO:0007669"/>
    <property type="project" value="UniProtKB-KW"/>
</dbReference>
<dbReference type="GO" id="GO:0003677">
    <property type="term" value="F:DNA binding"/>
    <property type="evidence" value="ECO:0007669"/>
    <property type="project" value="UniProtKB-UniRule"/>
</dbReference>
<dbReference type="GO" id="GO:0003899">
    <property type="term" value="F:DNA-directed RNA polymerase activity"/>
    <property type="evidence" value="ECO:0007669"/>
    <property type="project" value="UniProtKB-UniRule"/>
</dbReference>
<dbReference type="GO" id="GO:0006351">
    <property type="term" value="P:DNA-templated transcription"/>
    <property type="evidence" value="ECO:0007669"/>
    <property type="project" value="UniProtKB-UniRule"/>
</dbReference>
<dbReference type="HAMAP" id="MF_00366">
    <property type="entry name" value="RNApol_bact_RpoZ"/>
    <property type="match status" value="1"/>
</dbReference>
<dbReference type="InterPro" id="IPR003716">
    <property type="entry name" value="DNA-dir_RNA_pol_omega"/>
</dbReference>
<dbReference type="InterPro" id="IPR006110">
    <property type="entry name" value="Pol_omega/Rpo6/RPB6"/>
</dbReference>
<dbReference type="NCBIfam" id="NF001574">
    <property type="entry name" value="PRK00392.2-5"/>
    <property type="match status" value="1"/>
</dbReference>
<dbReference type="Pfam" id="PF01192">
    <property type="entry name" value="RNA_pol_Rpb6"/>
    <property type="match status" value="1"/>
</dbReference>
<keyword id="KW-0240">DNA-directed RNA polymerase</keyword>
<keyword id="KW-0548">Nucleotidyltransferase</keyword>
<keyword id="KW-1185">Reference proteome</keyword>
<keyword id="KW-0804">Transcription</keyword>
<keyword id="KW-0808">Transferase</keyword>
<protein>
    <recommendedName>
        <fullName evidence="1">DNA-directed RNA polymerase subunit omega</fullName>
        <shortName evidence="1">RNAP omega subunit</shortName>
        <ecNumber evidence="1">2.7.7.6</ecNumber>
    </recommendedName>
    <alternativeName>
        <fullName evidence="1">RNA polymerase omega subunit</fullName>
    </alternativeName>
    <alternativeName>
        <fullName evidence="1">Transcriptase subunit omega</fullName>
    </alternativeName>
</protein>
<name>RPOZ_PROM4</name>
<comment type="function">
    <text evidence="1">Promotes RNA polymerase assembly. Latches the N- and C-terminal regions of the beta' subunit thereby facilitating its interaction with the beta and alpha subunits.</text>
</comment>
<comment type="catalytic activity">
    <reaction evidence="1">
        <text>RNA(n) + a ribonucleoside 5'-triphosphate = RNA(n+1) + diphosphate</text>
        <dbReference type="Rhea" id="RHEA:21248"/>
        <dbReference type="Rhea" id="RHEA-COMP:14527"/>
        <dbReference type="Rhea" id="RHEA-COMP:17342"/>
        <dbReference type="ChEBI" id="CHEBI:33019"/>
        <dbReference type="ChEBI" id="CHEBI:61557"/>
        <dbReference type="ChEBI" id="CHEBI:140395"/>
        <dbReference type="EC" id="2.7.7.6"/>
    </reaction>
</comment>
<comment type="subunit">
    <text evidence="1">In cyanobacteria the RNAP catalytic core is composed of 2 alpha, 1 beta, 1 beta', 1 gamma and 1 omega subunit. When a sigma factor is associated with the core the holoenzyme is formed, which can initiate transcription.</text>
</comment>
<comment type="similarity">
    <text evidence="1">Belongs to the RNA polymerase subunit omega family.</text>
</comment>
<evidence type="ECO:0000255" key="1">
    <source>
        <dbReference type="HAMAP-Rule" id="MF_00366"/>
    </source>
</evidence>
<gene>
    <name evidence="1" type="primary">rpoZ</name>
    <name type="ordered locus">P9211_15491</name>
</gene>
<feature type="chain" id="PRO_1000121255" description="DNA-directed RNA polymerase subunit omega">
    <location>
        <begin position="1"/>
        <end position="75"/>
    </location>
</feature>
<accession>A9BCB8</accession>
<reference key="1">
    <citation type="journal article" date="2007" name="PLoS Genet.">
        <title>Patterns and implications of gene gain and loss in the evolution of Prochlorococcus.</title>
        <authorList>
            <person name="Kettler G.C."/>
            <person name="Martiny A.C."/>
            <person name="Huang K."/>
            <person name="Zucker J."/>
            <person name="Coleman M.L."/>
            <person name="Rodrigue S."/>
            <person name="Chen F."/>
            <person name="Lapidus A."/>
            <person name="Ferriera S."/>
            <person name="Johnson J."/>
            <person name="Steglich C."/>
            <person name="Church G.M."/>
            <person name="Richardson P."/>
            <person name="Chisholm S.W."/>
        </authorList>
    </citation>
    <scope>NUCLEOTIDE SEQUENCE [LARGE SCALE GENOMIC DNA]</scope>
    <source>
        <strain>MIT 9211</strain>
    </source>
</reference>
<proteinExistence type="inferred from homology"/>